<comment type="function">
    <text evidence="1">RNaseP catalyzes the removal of the 5'-leader sequence from pre-tRNA to produce the mature 5'-terminus. It can also cleave other RNA substrates such as 4.5S RNA. The protein component plays an auxiliary but essential role in vivo by binding to the 5'-leader sequence and broadening the substrate specificity of the ribozyme.</text>
</comment>
<comment type="catalytic activity">
    <reaction evidence="1">
        <text>Endonucleolytic cleavage of RNA, removing 5'-extranucleotides from tRNA precursor.</text>
        <dbReference type="EC" id="3.1.26.5"/>
    </reaction>
</comment>
<comment type="subunit">
    <text evidence="1">Consists of a catalytic RNA component (M1 or rnpB) and a protein subunit.</text>
</comment>
<comment type="similarity">
    <text evidence="1">Belongs to the RnpA family.</text>
</comment>
<gene>
    <name evidence="1" type="primary">rnpA</name>
    <name type="ordered locus">BH0441</name>
</gene>
<sequence>MKERNISIKSKVEIQELFKKGRFIRIEGINVFYEFTCLAISRILVTFPRIFKGAVKRNRVRRIFKECFRKQFALLKDRYVDFIFVVYPQKADVNYHEVETILKNIVVYIMKRNM</sequence>
<organism>
    <name type="scientific">Borrelia hermsii (strain HS1 / DAH)</name>
    <dbReference type="NCBI Taxonomy" id="314723"/>
    <lineage>
        <taxon>Bacteria</taxon>
        <taxon>Pseudomonadati</taxon>
        <taxon>Spirochaetota</taxon>
        <taxon>Spirochaetia</taxon>
        <taxon>Spirochaetales</taxon>
        <taxon>Borreliaceae</taxon>
        <taxon>Borrelia</taxon>
    </lineage>
</organism>
<evidence type="ECO:0000255" key="1">
    <source>
        <dbReference type="HAMAP-Rule" id="MF_00227"/>
    </source>
</evidence>
<protein>
    <recommendedName>
        <fullName evidence="1">Ribonuclease P protein component</fullName>
        <shortName evidence="1">RNase P protein</shortName>
        <shortName evidence="1">RNaseP protein</shortName>
        <ecNumber evidence="1">3.1.26.5</ecNumber>
    </recommendedName>
    <alternativeName>
        <fullName evidence="1">Protein C5</fullName>
    </alternativeName>
</protein>
<keyword id="KW-0255">Endonuclease</keyword>
<keyword id="KW-0378">Hydrolase</keyword>
<keyword id="KW-0540">Nuclease</keyword>
<keyword id="KW-0694">RNA-binding</keyword>
<keyword id="KW-0819">tRNA processing</keyword>
<proteinExistence type="inferred from homology"/>
<reference key="1">
    <citation type="submission" date="2004-12" db="EMBL/GenBank/DDBJ databases">
        <title>The genome sequence of Borrelia hermsii and Borrelia turicatae: comparative analysis of two agents of endemic N. America relapsing fever.</title>
        <authorList>
            <person name="Porcella S.F."/>
            <person name="Raffel S.J."/>
            <person name="Schrumpf M.E."/>
            <person name="Montgomery B."/>
            <person name="Smith T."/>
            <person name="Schwan T.G."/>
        </authorList>
    </citation>
    <scope>NUCLEOTIDE SEQUENCE [LARGE SCALE GENOMIC DNA]</scope>
    <source>
        <strain>HS1 / DAH</strain>
    </source>
</reference>
<accession>B2S0E4</accession>
<feature type="chain" id="PRO_1000194614" description="Ribonuclease P protein component">
    <location>
        <begin position="1"/>
        <end position="114"/>
    </location>
</feature>
<name>RNPA_BORHD</name>
<dbReference type="EC" id="3.1.26.5" evidence="1"/>
<dbReference type="EMBL" id="CP000048">
    <property type="protein sequence ID" value="AAX16950.1"/>
    <property type="molecule type" value="Genomic_DNA"/>
</dbReference>
<dbReference type="RefSeq" id="WP_012422206.1">
    <property type="nucleotide sequence ID" value="NZ_CP073136.1"/>
</dbReference>
<dbReference type="SMR" id="B2S0E4"/>
<dbReference type="GeneID" id="71843253"/>
<dbReference type="KEGG" id="bhr:BH0441"/>
<dbReference type="HOGENOM" id="CLU_2116283_0_0_12"/>
<dbReference type="Proteomes" id="UP000008834">
    <property type="component" value="Chromosome"/>
</dbReference>
<dbReference type="GO" id="GO:0004526">
    <property type="term" value="F:ribonuclease P activity"/>
    <property type="evidence" value="ECO:0007669"/>
    <property type="project" value="UniProtKB-UniRule"/>
</dbReference>
<dbReference type="GO" id="GO:0000049">
    <property type="term" value="F:tRNA binding"/>
    <property type="evidence" value="ECO:0007669"/>
    <property type="project" value="UniProtKB-UniRule"/>
</dbReference>
<dbReference type="GO" id="GO:0001682">
    <property type="term" value="P:tRNA 5'-leader removal"/>
    <property type="evidence" value="ECO:0007669"/>
    <property type="project" value="UniProtKB-UniRule"/>
</dbReference>
<dbReference type="Gene3D" id="3.30.230.10">
    <property type="match status" value="1"/>
</dbReference>
<dbReference type="HAMAP" id="MF_00227">
    <property type="entry name" value="RNase_P"/>
    <property type="match status" value="1"/>
</dbReference>
<dbReference type="InterPro" id="IPR020568">
    <property type="entry name" value="Ribosomal_Su5_D2-typ_SF"/>
</dbReference>
<dbReference type="InterPro" id="IPR014721">
    <property type="entry name" value="Ribsml_uS5_D2-typ_fold_subgr"/>
</dbReference>
<dbReference type="InterPro" id="IPR000100">
    <property type="entry name" value="RNase_P"/>
</dbReference>
<dbReference type="NCBIfam" id="TIGR00188">
    <property type="entry name" value="rnpA"/>
    <property type="match status" value="1"/>
</dbReference>
<dbReference type="Pfam" id="PF00825">
    <property type="entry name" value="Ribonuclease_P"/>
    <property type="match status" value="1"/>
</dbReference>
<dbReference type="SUPFAM" id="SSF54211">
    <property type="entry name" value="Ribosomal protein S5 domain 2-like"/>
    <property type="match status" value="1"/>
</dbReference>